<reference key="1">
    <citation type="journal article" date="1993" name="Plasmid">
        <title>On two transposable elements from Bacillus stearothermophilus.</title>
        <authorList>
            <person name="Xu K."/>
            <person name="He Z.-Q."/>
            <person name="Mao Y.-M."/>
            <person name="Shen R.-Q."/>
            <person name="Sheng Z.-J."/>
        </authorList>
    </citation>
    <scope>NUCLEOTIDE SEQUENCE [GENOMIC DNA]</scope>
    <source>
        <strain>CU21</strain>
    </source>
</reference>
<protein>
    <recommendedName>
        <fullName>Probable transposase for insertion sequence element IS5377</fullName>
    </recommendedName>
</protein>
<keyword id="KW-0233">DNA recombination</keyword>
<keyword id="KW-0238">DNA-binding</keyword>
<keyword id="KW-0814">Transposable element</keyword>
<keyword id="KW-0815">Transposition</keyword>
<evidence type="ECO:0000305" key="1"/>
<proteinExistence type="inferred from homology"/>
<sequence>MNKHTTLPNLMQKLVSDEEIQLIAEAVGYRDSSRTFTLRELIHFFLLAAMHQWKSFRHGADVGPLYGLPRFHYSTVSKKAKEVPYDIMKRLLALIISKCNRQTRRSLRFPKPLRVVDSTTVTVGKNRLPWAPYHGERAGVKLHVAYSPEFSLPADVVETTGLRHDGPVGEQLTNAQQVLVEDRAYFKIERLDRFVEQHQLFVIRMKDNIELHQKKSLNRLSSTSSSVQTDFTCQLGTKQCRSTKRHRVVIFRDANGRDIRVVTNLFHASAETIADMYQQRWAVEVFFRWVKQYLNVPTLFGTTENAVYNQLFAAFIAYVLLRWLYDQTKKQTNVSLSFISFVRRFFSGQLPLDWKSGMAAALFEYAQIYGRRMYNFG</sequence>
<organism>
    <name type="scientific">Geobacillus stearothermophilus</name>
    <name type="common">Bacillus stearothermophilus</name>
    <dbReference type="NCBI Taxonomy" id="1422"/>
    <lineage>
        <taxon>Bacteria</taxon>
        <taxon>Bacillati</taxon>
        <taxon>Bacillota</taxon>
        <taxon>Bacilli</taxon>
        <taxon>Bacillales</taxon>
        <taxon>Anoxybacillaceae</taxon>
        <taxon>Geobacillus</taxon>
    </lineage>
</organism>
<feature type="chain" id="PRO_0000173296" description="Probable transposase for insertion sequence element IS5377">
    <location>
        <begin position="1"/>
        <end position="377"/>
    </location>
</feature>
<name>T5377_GEOSE</name>
<dbReference type="EMBL" id="X67862">
    <property type="protein sequence ID" value="CAA48047.1"/>
    <property type="molecule type" value="Genomic_DNA"/>
</dbReference>
<dbReference type="PIR" id="S25156">
    <property type="entry name" value="S25156"/>
</dbReference>
<dbReference type="SMR" id="Q45620"/>
<dbReference type="GO" id="GO:0003677">
    <property type="term" value="F:DNA binding"/>
    <property type="evidence" value="ECO:0007669"/>
    <property type="project" value="UniProtKB-KW"/>
</dbReference>
<dbReference type="GO" id="GO:0004803">
    <property type="term" value="F:transposase activity"/>
    <property type="evidence" value="ECO:0007669"/>
    <property type="project" value="InterPro"/>
</dbReference>
<dbReference type="GO" id="GO:0006313">
    <property type="term" value="P:DNA transposition"/>
    <property type="evidence" value="ECO:0007669"/>
    <property type="project" value="InterPro"/>
</dbReference>
<dbReference type="InterPro" id="IPR012337">
    <property type="entry name" value="RNaseH-like_sf"/>
</dbReference>
<dbReference type="InterPro" id="IPR047952">
    <property type="entry name" value="Transpos_IS4"/>
</dbReference>
<dbReference type="InterPro" id="IPR002559">
    <property type="entry name" value="Transposase_11"/>
</dbReference>
<dbReference type="NCBIfam" id="NF033592">
    <property type="entry name" value="transpos_IS4_1"/>
    <property type="match status" value="1"/>
</dbReference>
<dbReference type="PANTHER" id="PTHR33258">
    <property type="entry name" value="TRANSPOSASE INSL FOR INSERTION SEQUENCE ELEMENT IS186A-RELATED"/>
    <property type="match status" value="1"/>
</dbReference>
<dbReference type="PANTHER" id="PTHR33258:SF1">
    <property type="entry name" value="TRANSPOSASE INSL FOR INSERTION SEQUENCE ELEMENT IS186A-RELATED"/>
    <property type="match status" value="1"/>
</dbReference>
<dbReference type="Pfam" id="PF01609">
    <property type="entry name" value="DDE_Tnp_1"/>
    <property type="match status" value="1"/>
</dbReference>
<dbReference type="SUPFAM" id="SSF53098">
    <property type="entry name" value="Ribonuclease H-like"/>
    <property type="match status" value="1"/>
</dbReference>
<accession>Q45620</accession>
<comment type="similarity">
    <text evidence="1">Belongs to the transposase 11 family.</text>
</comment>